<feature type="chain" id="PRO_0000333200" description="Intraflagellar transport protein 70A">
    <location>
        <begin position="1"/>
        <end position="665"/>
    </location>
</feature>
<feature type="repeat" description="TPR 1">
    <location>
        <begin position="11"/>
        <end position="44"/>
    </location>
</feature>
<feature type="repeat" description="TPR 2">
    <location>
        <begin position="45"/>
        <end position="78"/>
    </location>
</feature>
<feature type="repeat" description="TPR 3">
    <location>
        <begin position="154"/>
        <end position="187"/>
    </location>
</feature>
<feature type="repeat" description="TPR 4">
    <location>
        <begin position="189"/>
        <end position="221"/>
    </location>
</feature>
<feature type="repeat" description="TPR 5">
    <location>
        <begin position="393"/>
        <end position="424"/>
    </location>
</feature>
<feature type="repeat" description="TPR 6">
    <location>
        <begin position="425"/>
        <end position="457"/>
    </location>
</feature>
<feature type="repeat" description="TPR 7">
    <location>
        <begin position="459"/>
        <end position="492"/>
    </location>
</feature>
<feature type="repeat" description="TPR 8">
    <location>
        <begin position="544"/>
        <end position="577"/>
    </location>
</feature>
<feature type="coiled-coil region" evidence="2">
    <location>
        <begin position="508"/>
        <end position="535"/>
    </location>
</feature>
<feature type="sequence variant" id="VAR_054660" description="In dbSNP:rs28630685." evidence="3 4 5">
    <original>V</original>
    <variation>I</variation>
    <location>
        <position position="446"/>
    </location>
</feature>
<feature type="sequence variant" id="VAR_043123" description="In dbSNP:rs17854236." evidence="4">
    <original>K</original>
    <variation>R</variation>
    <location>
        <position position="577"/>
    </location>
</feature>
<feature type="sequence conflict" description="In Ref. 1; BAF85084." evidence="6" ref="1">
    <original>P</original>
    <variation>H</variation>
    <location>
        <position position="279"/>
    </location>
</feature>
<evidence type="ECO:0000250" key="1"/>
<evidence type="ECO:0000255" key="2"/>
<evidence type="ECO:0000269" key="3">
    <source>
    </source>
</evidence>
<evidence type="ECO:0000269" key="4">
    <source>
    </source>
</evidence>
<evidence type="ECO:0000269" key="5">
    <source ref="3"/>
</evidence>
<evidence type="ECO:0000305" key="6"/>
<evidence type="ECO:0000312" key="7">
    <source>
        <dbReference type="HGNC" id="HGNC:25853"/>
    </source>
</evidence>
<reference key="1">
    <citation type="journal article" date="2004" name="Nat. Genet.">
        <title>Complete sequencing and characterization of 21,243 full-length human cDNAs.</title>
        <authorList>
            <person name="Ota T."/>
            <person name="Suzuki Y."/>
            <person name="Nishikawa T."/>
            <person name="Otsuki T."/>
            <person name="Sugiyama T."/>
            <person name="Irie R."/>
            <person name="Wakamatsu A."/>
            <person name="Hayashi K."/>
            <person name="Sato H."/>
            <person name="Nagai K."/>
            <person name="Kimura K."/>
            <person name="Makita H."/>
            <person name="Sekine M."/>
            <person name="Obayashi M."/>
            <person name="Nishi T."/>
            <person name="Shibahara T."/>
            <person name="Tanaka T."/>
            <person name="Ishii S."/>
            <person name="Yamamoto J."/>
            <person name="Saito K."/>
            <person name="Kawai Y."/>
            <person name="Isono Y."/>
            <person name="Nakamura Y."/>
            <person name="Nagahari K."/>
            <person name="Murakami K."/>
            <person name="Yasuda T."/>
            <person name="Iwayanagi T."/>
            <person name="Wagatsuma M."/>
            <person name="Shiratori A."/>
            <person name="Sudo H."/>
            <person name="Hosoiri T."/>
            <person name="Kaku Y."/>
            <person name="Kodaira H."/>
            <person name="Kondo H."/>
            <person name="Sugawara M."/>
            <person name="Takahashi M."/>
            <person name="Kanda K."/>
            <person name="Yokoi T."/>
            <person name="Furuya T."/>
            <person name="Kikkawa E."/>
            <person name="Omura Y."/>
            <person name="Abe K."/>
            <person name="Kamihara K."/>
            <person name="Katsuta N."/>
            <person name="Sato K."/>
            <person name="Tanikawa M."/>
            <person name="Yamazaki M."/>
            <person name="Ninomiya K."/>
            <person name="Ishibashi T."/>
            <person name="Yamashita H."/>
            <person name="Murakawa K."/>
            <person name="Fujimori K."/>
            <person name="Tanai H."/>
            <person name="Kimata M."/>
            <person name="Watanabe M."/>
            <person name="Hiraoka S."/>
            <person name="Chiba Y."/>
            <person name="Ishida S."/>
            <person name="Ono Y."/>
            <person name="Takiguchi S."/>
            <person name="Watanabe S."/>
            <person name="Yosida M."/>
            <person name="Hotuta T."/>
            <person name="Kusano J."/>
            <person name="Kanehori K."/>
            <person name="Takahashi-Fujii A."/>
            <person name="Hara H."/>
            <person name="Tanase T.-O."/>
            <person name="Nomura Y."/>
            <person name="Togiya S."/>
            <person name="Komai F."/>
            <person name="Hara R."/>
            <person name="Takeuchi K."/>
            <person name="Arita M."/>
            <person name="Imose N."/>
            <person name="Musashino K."/>
            <person name="Yuuki H."/>
            <person name="Oshima A."/>
            <person name="Sasaki N."/>
            <person name="Aotsuka S."/>
            <person name="Yoshikawa Y."/>
            <person name="Matsunawa H."/>
            <person name="Ichihara T."/>
            <person name="Shiohata N."/>
            <person name="Sano S."/>
            <person name="Moriya S."/>
            <person name="Momiyama H."/>
            <person name="Satoh N."/>
            <person name="Takami S."/>
            <person name="Terashima Y."/>
            <person name="Suzuki O."/>
            <person name="Nakagawa S."/>
            <person name="Senoh A."/>
            <person name="Mizoguchi H."/>
            <person name="Goto Y."/>
            <person name="Shimizu F."/>
            <person name="Wakebe H."/>
            <person name="Hishigaki H."/>
            <person name="Watanabe T."/>
            <person name="Sugiyama A."/>
            <person name="Takemoto M."/>
            <person name="Kawakami B."/>
            <person name="Yamazaki M."/>
            <person name="Watanabe K."/>
            <person name="Kumagai A."/>
            <person name="Itakura S."/>
            <person name="Fukuzumi Y."/>
            <person name="Fujimori Y."/>
            <person name="Komiyama M."/>
            <person name="Tashiro H."/>
            <person name="Tanigami A."/>
            <person name="Fujiwara T."/>
            <person name="Ono T."/>
            <person name="Yamada K."/>
            <person name="Fujii Y."/>
            <person name="Ozaki K."/>
            <person name="Hirao M."/>
            <person name="Ohmori Y."/>
            <person name="Kawabata A."/>
            <person name="Hikiji T."/>
            <person name="Kobatake N."/>
            <person name="Inagaki H."/>
            <person name="Ikema Y."/>
            <person name="Okamoto S."/>
            <person name="Okitani R."/>
            <person name="Kawakami T."/>
            <person name="Noguchi S."/>
            <person name="Itoh T."/>
            <person name="Shigeta K."/>
            <person name="Senba T."/>
            <person name="Matsumura K."/>
            <person name="Nakajima Y."/>
            <person name="Mizuno T."/>
            <person name="Morinaga M."/>
            <person name="Sasaki M."/>
            <person name="Togashi T."/>
            <person name="Oyama M."/>
            <person name="Hata H."/>
            <person name="Watanabe M."/>
            <person name="Komatsu T."/>
            <person name="Mizushima-Sugano J."/>
            <person name="Satoh T."/>
            <person name="Shirai Y."/>
            <person name="Takahashi Y."/>
            <person name="Nakagawa K."/>
            <person name="Okumura K."/>
            <person name="Nagase T."/>
            <person name="Nomura N."/>
            <person name="Kikuchi H."/>
            <person name="Masuho Y."/>
            <person name="Yamashita R."/>
            <person name="Nakai K."/>
            <person name="Yada T."/>
            <person name="Nakamura Y."/>
            <person name="Ohara O."/>
            <person name="Isogai T."/>
            <person name="Sugano S."/>
        </authorList>
    </citation>
    <scope>NUCLEOTIDE SEQUENCE [LARGE SCALE MRNA]</scope>
    <scope>VARIANT ILE-446</scope>
    <source>
        <tissue>Testis</tissue>
    </source>
</reference>
<reference key="2">
    <citation type="journal article" date="2005" name="Nature">
        <title>Generation and annotation of the DNA sequences of human chromosomes 2 and 4.</title>
        <authorList>
            <person name="Hillier L.W."/>
            <person name="Graves T.A."/>
            <person name="Fulton R.S."/>
            <person name="Fulton L.A."/>
            <person name="Pepin K.H."/>
            <person name="Minx P."/>
            <person name="Wagner-McPherson C."/>
            <person name="Layman D."/>
            <person name="Wylie K."/>
            <person name="Sekhon M."/>
            <person name="Becker M.C."/>
            <person name="Fewell G.A."/>
            <person name="Delehaunty K.D."/>
            <person name="Miner T.L."/>
            <person name="Nash W.E."/>
            <person name="Kremitzki C."/>
            <person name="Oddy L."/>
            <person name="Du H."/>
            <person name="Sun H."/>
            <person name="Bradshaw-Cordum H."/>
            <person name="Ali J."/>
            <person name="Carter J."/>
            <person name="Cordes M."/>
            <person name="Harris A."/>
            <person name="Isak A."/>
            <person name="van Brunt A."/>
            <person name="Nguyen C."/>
            <person name="Du F."/>
            <person name="Courtney L."/>
            <person name="Kalicki J."/>
            <person name="Ozersky P."/>
            <person name="Abbott S."/>
            <person name="Armstrong J."/>
            <person name="Belter E.A."/>
            <person name="Caruso L."/>
            <person name="Cedroni M."/>
            <person name="Cotton M."/>
            <person name="Davidson T."/>
            <person name="Desai A."/>
            <person name="Elliott G."/>
            <person name="Erb T."/>
            <person name="Fronick C."/>
            <person name="Gaige T."/>
            <person name="Haakenson W."/>
            <person name="Haglund K."/>
            <person name="Holmes A."/>
            <person name="Harkins R."/>
            <person name="Kim K."/>
            <person name="Kruchowski S.S."/>
            <person name="Strong C.M."/>
            <person name="Grewal N."/>
            <person name="Goyea E."/>
            <person name="Hou S."/>
            <person name="Levy A."/>
            <person name="Martinka S."/>
            <person name="Mead K."/>
            <person name="McLellan M.D."/>
            <person name="Meyer R."/>
            <person name="Randall-Maher J."/>
            <person name="Tomlinson C."/>
            <person name="Dauphin-Kohlberg S."/>
            <person name="Kozlowicz-Reilly A."/>
            <person name="Shah N."/>
            <person name="Swearengen-Shahid S."/>
            <person name="Snider J."/>
            <person name="Strong J.T."/>
            <person name="Thompson J."/>
            <person name="Yoakum M."/>
            <person name="Leonard S."/>
            <person name="Pearman C."/>
            <person name="Trani L."/>
            <person name="Radionenko M."/>
            <person name="Waligorski J.E."/>
            <person name="Wang C."/>
            <person name="Rock S.M."/>
            <person name="Tin-Wollam A.-M."/>
            <person name="Maupin R."/>
            <person name="Latreille P."/>
            <person name="Wendl M.C."/>
            <person name="Yang S.-P."/>
            <person name="Pohl C."/>
            <person name="Wallis J.W."/>
            <person name="Spieth J."/>
            <person name="Bieri T.A."/>
            <person name="Berkowicz N."/>
            <person name="Nelson J.O."/>
            <person name="Osborne J."/>
            <person name="Ding L."/>
            <person name="Meyer R."/>
            <person name="Sabo A."/>
            <person name="Shotland Y."/>
            <person name="Sinha P."/>
            <person name="Wohldmann P.E."/>
            <person name="Cook L.L."/>
            <person name="Hickenbotham M.T."/>
            <person name="Eldred J."/>
            <person name="Williams D."/>
            <person name="Jones T.A."/>
            <person name="She X."/>
            <person name="Ciccarelli F.D."/>
            <person name="Izaurralde E."/>
            <person name="Taylor J."/>
            <person name="Schmutz J."/>
            <person name="Myers R.M."/>
            <person name="Cox D.R."/>
            <person name="Huang X."/>
            <person name="McPherson J.D."/>
            <person name="Mardis E.R."/>
            <person name="Clifton S.W."/>
            <person name="Warren W.C."/>
            <person name="Chinwalla A.T."/>
            <person name="Eddy S.R."/>
            <person name="Marra M.A."/>
            <person name="Ovcharenko I."/>
            <person name="Furey T.S."/>
            <person name="Miller W."/>
            <person name="Eichler E.E."/>
            <person name="Bork P."/>
            <person name="Suyama M."/>
            <person name="Torrents D."/>
            <person name="Waterston R.H."/>
            <person name="Wilson R.K."/>
        </authorList>
    </citation>
    <scope>NUCLEOTIDE SEQUENCE [LARGE SCALE GENOMIC DNA]</scope>
</reference>
<reference key="3">
    <citation type="submission" date="2005-09" db="EMBL/GenBank/DDBJ databases">
        <authorList>
            <person name="Mural R.J."/>
            <person name="Istrail S."/>
            <person name="Sutton G.G."/>
            <person name="Florea L."/>
            <person name="Halpern A.L."/>
            <person name="Mobarry C.M."/>
            <person name="Lippert R."/>
            <person name="Walenz B."/>
            <person name="Shatkay H."/>
            <person name="Dew I."/>
            <person name="Miller J.R."/>
            <person name="Flanigan M.J."/>
            <person name="Edwards N.J."/>
            <person name="Bolanos R."/>
            <person name="Fasulo D."/>
            <person name="Halldorsson B.V."/>
            <person name="Hannenhalli S."/>
            <person name="Turner R."/>
            <person name="Yooseph S."/>
            <person name="Lu F."/>
            <person name="Nusskern D.R."/>
            <person name="Shue B.C."/>
            <person name="Zheng X.H."/>
            <person name="Zhong F."/>
            <person name="Delcher A.L."/>
            <person name="Huson D.H."/>
            <person name="Kravitz S.A."/>
            <person name="Mouchard L."/>
            <person name="Reinert K."/>
            <person name="Remington K.A."/>
            <person name="Clark A.G."/>
            <person name="Waterman M.S."/>
            <person name="Eichler E.E."/>
            <person name="Adams M.D."/>
            <person name="Hunkapiller M.W."/>
            <person name="Myers E.W."/>
            <person name="Venter J.C."/>
        </authorList>
    </citation>
    <scope>NUCLEOTIDE SEQUENCE [LARGE SCALE GENOMIC DNA]</scope>
    <scope>VARIANT ILE-446</scope>
</reference>
<reference key="4">
    <citation type="journal article" date="2004" name="Genome Res.">
        <title>The status, quality, and expansion of the NIH full-length cDNA project: the Mammalian Gene Collection (MGC).</title>
        <authorList>
            <consortium name="The MGC Project Team"/>
        </authorList>
    </citation>
    <scope>NUCLEOTIDE SEQUENCE [LARGE SCALE MRNA]</scope>
    <scope>VARIANTS ILE-446 AND ARG-577</scope>
    <source>
        <tissue>Testis</tissue>
    </source>
</reference>
<protein>
    <recommendedName>
        <fullName evidence="6">Intraflagellar transport protein 70A</fullName>
    </recommendedName>
    <alternativeName>
        <fullName>Tetratricopeptide repeat protein 30A</fullName>
        <shortName>TPR repeat protein 30A</shortName>
    </alternativeName>
</protein>
<sequence>MAGLSGAQIPDGEFTALVYRLIRDARYAEAVQLLGRELQRSPRSRAGLSLLGYCYYRLQEFALAAECYEQLGQLHPELEQYRLYQAQALYKACLYPEATRVAFLLLDNPAYHSRVLRLQAAIKYSEGDLPGSRSLVEQLLSGEGGEESGGDNETDGQVNLGCLLYKEGQYEAACSKFSATLQASGYQPDLSYNLALAYYSSRQYASALKHIAEIIERGIRQHPELGVGMTTEGFDVRSVGNTLVLHQTALVEAFNLKAAIEYQLRNYEVAQETLTDMPPRAEEELDPVTLHNQALMNMDARPTEGFEKLQFLLQQNPFPPETFGNLLLLYCKYEYFDLAADVLAENAHLTYKFLTPYLYDFLDALITCQTAPEEAFIKLDGLAGMLTEQLRRLTKQVQEARHNRDDEAIKKAVNEYDETMEKYIPVLMAQAKIYWNLENYPMVEKVFRKSVEFCNDHDVWKLNVAHVLFMQENKYKEAIGFYEPIVKKHYDNILNVSAIVLANLCVSYIMTSQNEEAEELMRKIEKEEEQLSYDDPNRKMYHLCIVNLVIGTLYCAKGNYEFGISRVIKSLEPYNKKLGTDTWYYAKRCFLSLLENMSKHMIVIHDSVIQECVQFLGHCELYGTNIPAVIEQPLEEERMHVGKNTVTDESRQLKALIYEIIGWNK</sequence>
<organism>
    <name type="scientific">Homo sapiens</name>
    <name type="common">Human</name>
    <dbReference type="NCBI Taxonomy" id="9606"/>
    <lineage>
        <taxon>Eukaryota</taxon>
        <taxon>Metazoa</taxon>
        <taxon>Chordata</taxon>
        <taxon>Craniata</taxon>
        <taxon>Vertebrata</taxon>
        <taxon>Euteleostomi</taxon>
        <taxon>Mammalia</taxon>
        <taxon>Eutheria</taxon>
        <taxon>Euarchontoglires</taxon>
        <taxon>Primates</taxon>
        <taxon>Haplorrhini</taxon>
        <taxon>Catarrhini</taxon>
        <taxon>Hominidae</taxon>
        <taxon>Homo</taxon>
    </lineage>
</organism>
<gene>
    <name evidence="7" type="primary">IFT70A</name>
    <name type="synonym">TTC30A</name>
</gene>
<name>IT70A_HUMAN</name>
<dbReference type="EMBL" id="AK292395">
    <property type="protein sequence ID" value="BAF85084.1"/>
    <property type="molecule type" value="mRNA"/>
</dbReference>
<dbReference type="EMBL" id="AC073834">
    <property type="status" value="NOT_ANNOTATED_CDS"/>
    <property type="molecule type" value="Genomic_DNA"/>
</dbReference>
<dbReference type="EMBL" id="CH471058">
    <property type="protein sequence ID" value="EAX11053.1"/>
    <property type="molecule type" value="Genomic_DNA"/>
</dbReference>
<dbReference type="EMBL" id="BC042848">
    <property type="protein sequence ID" value="AAH42848.1"/>
    <property type="molecule type" value="mRNA"/>
</dbReference>
<dbReference type="EMBL" id="BC048006">
    <property type="protein sequence ID" value="AAH48006.2"/>
    <property type="molecule type" value="mRNA"/>
</dbReference>
<dbReference type="CCDS" id="CCDS2276.1"/>
<dbReference type="RefSeq" id="NP_689488.3">
    <property type="nucleotide sequence ID" value="NM_152275.3"/>
</dbReference>
<dbReference type="SMR" id="Q86WT1"/>
<dbReference type="BioGRID" id="124908">
    <property type="interactions" value="39"/>
</dbReference>
<dbReference type="FunCoup" id="Q86WT1">
    <property type="interactions" value="303"/>
</dbReference>
<dbReference type="IntAct" id="Q86WT1">
    <property type="interactions" value="30"/>
</dbReference>
<dbReference type="STRING" id="9606.ENSP00000347915"/>
<dbReference type="iPTMnet" id="Q86WT1"/>
<dbReference type="PhosphoSitePlus" id="Q86WT1"/>
<dbReference type="BioMuta" id="TTC30A"/>
<dbReference type="DMDM" id="224471874"/>
<dbReference type="jPOST" id="Q86WT1"/>
<dbReference type="MassIVE" id="Q86WT1"/>
<dbReference type="PaxDb" id="9606-ENSP00000347915"/>
<dbReference type="PeptideAtlas" id="Q86WT1"/>
<dbReference type="ProteomicsDB" id="70200"/>
<dbReference type="Pumba" id="Q86WT1"/>
<dbReference type="Antibodypedia" id="33927">
    <property type="antibodies" value="79 antibodies from 20 providers"/>
</dbReference>
<dbReference type="DNASU" id="92104"/>
<dbReference type="Ensembl" id="ENST00000355689.6">
    <property type="protein sequence ID" value="ENSP00000347915.4"/>
    <property type="gene ID" value="ENSG00000197557.7"/>
</dbReference>
<dbReference type="GeneID" id="92104"/>
<dbReference type="KEGG" id="hsa:92104"/>
<dbReference type="MANE-Select" id="ENST00000355689.6">
    <property type="protein sequence ID" value="ENSP00000347915.4"/>
    <property type="RefSeq nucleotide sequence ID" value="NM_152275.4"/>
    <property type="RefSeq protein sequence ID" value="NP_689488.3"/>
</dbReference>
<dbReference type="UCSC" id="uc002ulo.4">
    <property type="organism name" value="human"/>
</dbReference>
<dbReference type="AGR" id="HGNC:25853"/>
<dbReference type="CTD" id="92104"/>
<dbReference type="DisGeNET" id="92104"/>
<dbReference type="GeneCards" id="IFT70A"/>
<dbReference type="HGNC" id="HGNC:25853">
    <property type="gene designation" value="IFT70A"/>
</dbReference>
<dbReference type="HPA" id="ENSG00000197557">
    <property type="expression patterns" value="Low tissue specificity"/>
</dbReference>
<dbReference type="MIM" id="620741">
    <property type="type" value="gene"/>
</dbReference>
<dbReference type="neXtProt" id="NX_Q86WT1"/>
<dbReference type="OpenTargets" id="ENSG00000197557"/>
<dbReference type="PharmGKB" id="PA145147829"/>
<dbReference type="VEuPathDB" id="HostDB:ENSG00000197557"/>
<dbReference type="eggNOG" id="KOG4340">
    <property type="taxonomic scope" value="Eukaryota"/>
</dbReference>
<dbReference type="GeneTree" id="ENSGT00390000010116"/>
<dbReference type="HOGENOM" id="CLU_023760_0_0_1"/>
<dbReference type="InParanoid" id="Q86WT1"/>
<dbReference type="OMA" id="FMQEDKY"/>
<dbReference type="OrthoDB" id="4072at9604"/>
<dbReference type="PAN-GO" id="Q86WT1">
    <property type="GO annotations" value="4 GO annotations based on evolutionary models"/>
</dbReference>
<dbReference type="PhylomeDB" id="Q86WT1"/>
<dbReference type="TreeFam" id="TF314592"/>
<dbReference type="PathwayCommons" id="Q86WT1"/>
<dbReference type="Reactome" id="R-HSA-5620924">
    <property type="pathway name" value="Intraflagellar transport"/>
</dbReference>
<dbReference type="SignaLink" id="Q86WT1"/>
<dbReference type="BioGRID-ORCS" id="92104">
    <property type="hits" value="228 hits in 1151 CRISPR screens"/>
</dbReference>
<dbReference type="ChiTaRS" id="TTC30A">
    <property type="organism name" value="human"/>
</dbReference>
<dbReference type="GenomeRNAi" id="92104"/>
<dbReference type="Pharos" id="Q86WT1">
    <property type="development level" value="Tdark"/>
</dbReference>
<dbReference type="PRO" id="PR:Q86WT1"/>
<dbReference type="Proteomes" id="UP000005640">
    <property type="component" value="Chromosome 2"/>
</dbReference>
<dbReference type="RNAct" id="Q86WT1">
    <property type="molecule type" value="protein"/>
</dbReference>
<dbReference type="Bgee" id="ENSG00000197557">
    <property type="expression patterns" value="Expressed in male germ line stem cell (sensu Vertebrata) in testis and 122 other cell types or tissues"/>
</dbReference>
<dbReference type="GO" id="GO:0005879">
    <property type="term" value="C:axonemal microtubule"/>
    <property type="evidence" value="ECO:0000318"/>
    <property type="project" value="GO_Central"/>
</dbReference>
<dbReference type="GO" id="GO:0030992">
    <property type="term" value="C:intraciliary transport particle B"/>
    <property type="evidence" value="ECO:0000318"/>
    <property type="project" value="GO_Central"/>
</dbReference>
<dbReference type="GO" id="GO:0120170">
    <property type="term" value="F:intraciliary transport particle B binding"/>
    <property type="evidence" value="ECO:0000318"/>
    <property type="project" value="GO_Central"/>
</dbReference>
<dbReference type="GO" id="GO:0042073">
    <property type="term" value="P:intraciliary transport"/>
    <property type="evidence" value="ECO:0000318"/>
    <property type="project" value="GO_Central"/>
</dbReference>
<dbReference type="FunFam" id="1.25.40.10:FF:000226">
    <property type="entry name" value="Tetratricopeptide repeat protein 30A"/>
    <property type="match status" value="1"/>
</dbReference>
<dbReference type="FunFam" id="1.25.40.10:FF:000211">
    <property type="entry name" value="tetratricopeptide repeat protein 30B"/>
    <property type="match status" value="1"/>
</dbReference>
<dbReference type="Gene3D" id="1.25.40.10">
    <property type="entry name" value="Tetratricopeptide repeat domain"/>
    <property type="match status" value="2"/>
</dbReference>
<dbReference type="InterPro" id="IPR011990">
    <property type="entry name" value="TPR-like_helical_dom_sf"/>
</dbReference>
<dbReference type="InterPro" id="IPR019734">
    <property type="entry name" value="TPR_rpt"/>
</dbReference>
<dbReference type="InterPro" id="IPR039941">
    <property type="entry name" value="TT30"/>
</dbReference>
<dbReference type="PANTHER" id="PTHR20931:SF3">
    <property type="entry name" value="INTRAFLAGELLAR TRANSPORT PROTEIN 70A"/>
    <property type="match status" value="1"/>
</dbReference>
<dbReference type="PANTHER" id="PTHR20931">
    <property type="entry name" value="TETRATRICOPEPTIDE REPEAT PROTEIN 30"/>
    <property type="match status" value="1"/>
</dbReference>
<dbReference type="Pfam" id="PF13432">
    <property type="entry name" value="TPR_16"/>
    <property type="match status" value="2"/>
</dbReference>
<dbReference type="SMART" id="SM00028">
    <property type="entry name" value="TPR"/>
    <property type="match status" value="4"/>
</dbReference>
<dbReference type="SUPFAM" id="SSF48452">
    <property type="entry name" value="TPR-like"/>
    <property type="match status" value="3"/>
</dbReference>
<dbReference type="PROSITE" id="PS50293">
    <property type="entry name" value="TPR_REGION"/>
    <property type="match status" value="1"/>
</dbReference>
<keyword id="KW-0966">Cell projection</keyword>
<keyword id="KW-0969">Cilium</keyword>
<keyword id="KW-0970">Cilium biogenesis/degradation</keyword>
<keyword id="KW-0175">Coiled coil</keyword>
<keyword id="KW-1267">Proteomics identification</keyword>
<keyword id="KW-1185">Reference proteome</keyword>
<keyword id="KW-0677">Repeat</keyword>
<keyword id="KW-0802">TPR repeat</keyword>
<accession>Q86WT1</accession>
<accession>A8K8N0</accession>
<accession>Q8IVP2</accession>
<proteinExistence type="evidence at protein level"/>
<comment type="function">
    <text evidence="1">Required for polyglutamylation of axonemal tubulin. Plays a role in anterograde intraflagellar transport (IFT), the process by which cilia precursors are transported from the base of the cilium to the site of their incorporation at the tip.</text>
</comment>
<comment type="subcellular location">
    <subcellularLocation>
        <location evidence="1">Cell projection</location>
        <location evidence="1">Cilium</location>
    </subcellularLocation>
</comment>
<comment type="similarity">
    <text evidence="6">Belongs to the TTC30/dfy-1/fleer family.</text>
</comment>